<organism>
    <name type="scientific">Staphylococcus aureus (strain COL)</name>
    <dbReference type="NCBI Taxonomy" id="93062"/>
    <lineage>
        <taxon>Bacteria</taxon>
        <taxon>Bacillati</taxon>
        <taxon>Bacillota</taxon>
        <taxon>Bacilli</taxon>
        <taxon>Bacillales</taxon>
        <taxon>Staphylococcaceae</taxon>
        <taxon>Staphylococcus</taxon>
    </lineage>
</organism>
<evidence type="ECO:0000255" key="1">
    <source>
        <dbReference type="HAMAP-Rule" id="MF_01249"/>
    </source>
</evidence>
<dbReference type="EC" id="2.7.11.-" evidence="1"/>
<dbReference type="EC" id="2.7.4.-" evidence="1"/>
<dbReference type="EMBL" id="CP000046">
    <property type="protein sequence ID" value="AAW36381.1"/>
    <property type="molecule type" value="Genomic_DNA"/>
</dbReference>
<dbReference type="RefSeq" id="WP_000958224.1">
    <property type="nucleotide sequence ID" value="NZ_JBGOFO010000005.1"/>
</dbReference>
<dbReference type="SMR" id="Q5HHQ8"/>
<dbReference type="KEGG" id="sac:SACOL0825"/>
<dbReference type="HOGENOM" id="CLU_052030_0_1_9"/>
<dbReference type="Proteomes" id="UP000000530">
    <property type="component" value="Chromosome"/>
</dbReference>
<dbReference type="GO" id="GO:0005524">
    <property type="term" value="F:ATP binding"/>
    <property type="evidence" value="ECO:0007669"/>
    <property type="project" value="UniProtKB-UniRule"/>
</dbReference>
<dbReference type="GO" id="GO:0000287">
    <property type="term" value="F:magnesium ion binding"/>
    <property type="evidence" value="ECO:0007669"/>
    <property type="project" value="UniProtKB-UniRule"/>
</dbReference>
<dbReference type="GO" id="GO:0000155">
    <property type="term" value="F:phosphorelay sensor kinase activity"/>
    <property type="evidence" value="ECO:0007669"/>
    <property type="project" value="InterPro"/>
</dbReference>
<dbReference type="GO" id="GO:0004674">
    <property type="term" value="F:protein serine/threonine kinase activity"/>
    <property type="evidence" value="ECO:0007669"/>
    <property type="project" value="UniProtKB-KW"/>
</dbReference>
<dbReference type="GO" id="GO:0004712">
    <property type="term" value="F:protein serine/threonine/tyrosine kinase activity"/>
    <property type="evidence" value="ECO:0007669"/>
    <property type="project" value="UniProtKB-UniRule"/>
</dbReference>
<dbReference type="GO" id="GO:0006109">
    <property type="term" value="P:regulation of carbohydrate metabolic process"/>
    <property type="evidence" value="ECO:0007669"/>
    <property type="project" value="UniProtKB-UniRule"/>
</dbReference>
<dbReference type="CDD" id="cd01918">
    <property type="entry name" value="HprK_C"/>
    <property type="match status" value="1"/>
</dbReference>
<dbReference type="FunFam" id="3.40.1390.20:FF:000002">
    <property type="entry name" value="HPr kinase/phosphorylase"/>
    <property type="match status" value="1"/>
</dbReference>
<dbReference type="FunFam" id="3.40.50.300:FF:000174">
    <property type="entry name" value="HPr kinase/phosphorylase"/>
    <property type="match status" value="1"/>
</dbReference>
<dbReference type="Gene3D" id="3.40.1390.20">
    <property type="entry name" value="HprK N-terminal domain-like"/>
    <property type="match status" value="1"/>
</dbReference>
<dbReference type="Gene3D" id="3.40.50.300">
    <property type="entry name" value="P-loop containing nucleotide triphosphate hydrolases"/>
    <property type="match status" value="1"/>
</dbReference>
<dbReference type="HAMAP" id="MF_01249">
    <property type="entry name" value="HPr_kinase"/>
    <property type="match status" value="1"/>
</dbReference>
<dbReference type="InterPro" id="IPR003755">
    <property type="entry name" value="HPr(Ser)_kin/Pase"/>
</dbReference>
<dbReference type="InterPro" id="IPR011104">
    <property type="entry name" value="Hpr_kin/Pase_C"/>
</dbReference>
<dbReference type="InterPro" id="IPR011126">
    <property type="entry name" value="Hpr_kin/Pase_Hpr_N"/>
</dbReference>
<dbReference type="InterPro" id="IPR027417">
    <property type="entry name" value="P-loop_NTPase"/>
</dbReference>
<dbReference type="InterPro" id="IPR028979">
    <property type="entry name" value="Ser_kin/Pase_Hpr-like_N_sf"/>
</dbReference>
<dbReference type="NCBIfam" id="TIGR00679">
    <property type="entry name" value="hpr-ser"/>
    <property type="match status" value="1"/>
</dbReference>
<dbReference type="PANTHER" id="PTHR30305:SF1">
    <property type="entry name" value="HPR KINASE_PHOSPHORYLASE"/>
    <property type="match status" value="1"/>
</dbReference>
<dbReference type="PANTHER" id="PTHR30305">
    <property type="entry name" value="PROTEIN YJDM-RELATED"/>
    <property type="match status" value="1"/>
</dbReference>
<dbReference type="Pfam" id="PF07475">
    <property type="entry name" value="Hpr_kinase_C"/>
    <property type="match status" value="1"/>
</dbReference>
<dbReference type="Pfam" id="PF02603">
    <property type="entry name" value="Hpr_kinase_N"/>
    <property type="match status" value="1"/>
</dbReference>
<dbReference type="SUPFAM" id="SSF75138">
    <property type="entry name" value="HprK N-terminal domain-like"/>
    <property type="match status" value="1"/>
</dbReference>
<dbReference type="SUPFAM" id="SSF53795">
    <property type="entry name" value="PEP carboxykinase-like"/>
    <property type="match status" value="1"/>
</dbReference>
<name>HPRK_STAAC</name>
<keyword id="KW-0067">ATP-binding</keyword>
<keyword id="KW-0119">Carbohydrate metabolism</keyword>
<keyword id="KW-0418">Kinase</keyword>
<keyword id="KW-0460">Magnesium</keyword>
<keyword id="KW-0479">Metal-binding</keyword>
<keyword id="KW-0511">Multifunctional enzyme</keyword>
<keyword id="KW-0547">Nucleotide-binding</keyword>
<keyword id="KW-0723">Serine/threonine-protein kinase</keyword>
<keyword id="KW-0808">Transferase</keyword>
<reference key="1">
    <citation type="journal article" date="2005" name="J. Bacteriol.">
        <title>Insights on evolution of virulence and resistance from the complete genome analysis of an early methicillin-resistant Staphylococcus aureus strain and a biofilm-producing methicillin-resistant Staphylococcus epidermidis strain.</title>
        <authorList>
            <person name="Gill S.R."/>
            <person name="Fouts D.E."/>
            <person name="Archer G.L."/>
            <person name="Mongodin E.F."/>
            <person name="DeBoy R.T."/>
            <person name="Ravel J."/>
            <person name="Paulsen I.T."/>
            <person name="Kolonay J.F."/>
            <person name="Brinkac L.M."/>
            <person name="Beanan M.J."/>
            <person name="Dodson R.J."/>
            <person name="Daugherty S.C."/>
            <person name="Madupu R."/>
            <person name="Angiuoli S.V."/>
            <person name="Durkin A.S."/>
            <person name="Haft D.H."/>
            <person name="Vamathevan J.J."/>
            <person name="Khouri H."/>
            <person name="Utterback T.R."/>
            <person name="Lee C."/>
            <person name="Dimitrov G."/>
            <person name="Jiang L."/>
            <person name="Qin H."/>
            <person name="Weidman J."/>
            <person name="Tran K."/>
            <person name="Kang K.H."/>
            <person name="Hance I.R."/>
            <person name="Nelson K.E."/>
            <person name="Fraser C.M."/>
        </authorList>
    </citation>
    <scope>NUCLEOTIDE SEQUENCE [LARGE SCALE GENOMIC DNA]</scope>
    <source>
        <strain>COL</strain>
    </source>
</reference>
<sequence length="310" mass="34482">MLTTEKLVETLKLDLIAGEEGLSKPIKNADISRPGLEMAGYFSHYASDRIQLLGTTELSFYNLLPDKDRAGRMRKLCRPETPAIIVTRGLQPPEELVEAAKELNTPLIVAKDATTSLMSRLTTFLEHALAKTTSLHGVLVDVYGVGVLITGDSGIGKSETALELVKRGHRLVADDNVEIRQINKDELIGKPPKLIEHLLEIRGLGIINVMTLFGAGSILTEKRIRLNINLENWNKQKLYDRVGLNEETLSILDTEITKKTIPVRPGRNVAVIIEVAAMNYRLNIMGINTAEEFSERLNEEIIKNSHKSEE</sequence>
<comment type="function">
    <text evidence="1">Catalyzes the ATP- as well as the pyrophosphate-dependent phosphorylation of a specific serine residue in HPr, a phosphocarrier protein of the phosphoenolpyruvate-dependent sugar phosphotransferase system (PTS). HprK/P also catalyzes the pyrophosphate-producing, inorganic phosphate-dependent dephosphorylation (phosphorolysis) of seryl-phosphorylated HPr (P-Ser-HPr). The two antagonistic activities of HprK/P are regulated by several intracellular metabolites, which change their concentration in response to the absence or presence of rapidly metabolisable carbon sources (glucose, fructose, etc.) in the growth medium. Therefore, by controlling the phosphorylation state of HPr, HPrK/P is a sensor enzyme that plays a major role in the regulation of carbon metabolism and sugar transport: it mediates carbon catabolite repression (CCR), and regulates PTS-catalyzed carbohydrate uptake and inducer exclusion.</text>
</comment>
<comment type="catalytic activity">
    <reaction evidence="1">
        <text>[HPr protein]-L-serine + ATP = [HPr protein]-O-phospho-L-serine + ADP + H(+)</text>
        <dbReference type="Rhea" id="RHEA:46600"/>
        <dbReference type="Rhea" id="RHEA-COMP:11602"/>
        <dbReference type="Rhea" id="RHEA-COMP:11603"/>
        <dbReference type="ChEBI" id="CHEBI:15378"/>
        <dbReference type="ChEBI" id="CHEBI:29999"/>
        <dbReference type="ChEBI" id="CHEBI:30616"/>
        <dbReference type="ChEBI" id="CHEBI:83421"/>
        <dbReference type="ChEBI" id="CHEBI:456216"/>
    </reaction>
</comment>
<comment type="catalytic activity">
    <reaction evidence="1">
        <text>[HPr protein]-O-phospho-L-serine + phosphate + H(+) = [HPr protein]-L-serine + diphosphate</text>
        <dbReference type="Rhea" id="RHEA:46604"/>
        <dbReference type="Rhea" id="RHEA-COMP:11602"/>
        <dbReference type="Rhea" id="RHEA-COMP:11603"/>
        <dbReference type="ChEBI" id="CHEBI:15378"/>
        <dbReference type="ChEBI" id="CHEBI:29999"/>
        <dbReference type="ChEBI" id="CHEBI:33019"/>
        <dbReference type="ChEBI" id="CHEBI:43474"/>
        <dbReference type="ChEBI" id="CHEBI:83421"/>
    </reaction>
</comment>
<comment type="cofactor">
    <cofactor evidence="1">
        <name>Mg(2+)</name>
        <dbReference type="ChEBI" id="CHEBI:18420"/>
    </cofactor>
</comment>
<comment type="subunit">
    <text evidence="1">Homohexamer.</text>
</comment>
<comment type="domain">
    <text evidence="1">The Walker A ATP-binding motif also binds Pi and PPi.</text>
</comment>
<comment type="miscellaneous">
    <text evidence="1">Both phosphorylation and phosphorolysis are carried out by the same active site and suggest a common mechanism for both reactions.</text>
</comment>
<comment type="similarity">
    <text evidence="1">Belongs to the HPrK/P family.</text>
</comment>
<accession>Q5HHQ8</accession>
<feature type="chain" id="PRO_0000058981" description="HPr kinase/phosphorylase">
    <location>
        <begin position="1"/>
        <end position="310"/>
    </location>
</feature>
<feature type="region of interest" description="Important for the catalytic mechanism of both phosphorylation and dephosphorylation" evidence="1">
    <location>
        <begin position="199"/>
        <end position="208"/>
    </location>
</feature>
<feature type="region of interest" description="Important for the catalytic mechanism of dephosphorylation" evidence="1">
    <location>
        <begin position="262"/>
        <end position="267"/>
    </location>
</feature>
<feature type="active site" evidence="1">
    <location>
        <position position="136"/>
    </location>
</feature>
<feature type="active site" evidence="1">
    <location>
        <position position="157"/>
    </location>
</feature>
<feature type="active site" description="Proton acceptor; for phosphorylation activity. Proton donor; for dephosphorylation activity" evidence="1">
    <location>
        <position position="175"/>
    </location>
</feature>
<feature type="active site" evidence="1">
    <location>
        <position position="241"/>
    </location>
</feature>
<feature type="binding site" evidence="1">
    <location>
        <begin position="151"/>
        <end position="158"/>
    </location>
    <ligand>
        <name>ATP</name>
        <dbReference type="ChEBI" id="CHEBI:30616"/>
    </ligand>
</feature>
<feature type="binding site" evidence="1">
    <location>
        <position position="158"/>
    </location>
    <ligand>
        <name>Mg(2+)</name>
        <dbReference type="ChEBI" id="CHEBI:18420"/>
    </ligand>
</feature>
<feature type="binding site" evidence="1">
    <location>
        <position position="200"/>
    </location>
    <ligand>
        <name>Mg(2+)</name>
        <dbReference type="ChEBI" id="CHEBI:18420"/>
    </ligand>
</feature>
<protein>
    <recommendedName>
        <fullName evidence="1">HPr kinase/phosphorylase</fullName>
        <shortName evidence="1">HPrK/P</shortName>
        <ecNumber evidence="1">2.7.11.-</ecNumber>
        <ecNumber evidence="1">2.7.4.-</ecNumber>
    </recommendedName>
    <alternativeName>
        <fullName evidence="1">HPr(Ser) kinase/phosphorylase</fullName>
    </alternativeName>
</protein>
<proteinExistence type="inferred from homology"/>
<gene>
    <name evidence="1" type="primary">hprK</name>
    <name type="ordered locus">SACOL0825</name>
</gene>